<organism>
    <name type="scientific">Influenza A virus (strain A/X-31 H3N2)</name>
    <dbReference type="NCBI Taxonomy" id="132504"/>
    <lineage>
        <taxon>Viruses</taxon>
        <taxon>Riboviria</taxon>
        <taxon>Orthornavirae</taxon>
        <taxon>Negarnaviricota</taxon>
        <taxon>Polyploviricotina</taxon>
        <taxon>Insthoviricetes</taxon>
        <taxon>Articulavirales</taxon>
        <taxon>Orthomyxoviridae</taxon>
        <taxon>Alphainfluenzavirus</taxon>
        <taxon>Alphainfluenzavirus influenzae</taxon>
        <taxon>Influenza A virus</taxon>
    </lineage>
</organism>
<organismHost>
    <name type="scientific">Aves</name>
    <dbReference type="NCBI Taxonomy" id="8782"/>
</organismHost>
<organismHost>
    <name type="scientific">Cetacea</name>
    <name type="common">whales</name>
    <dbReference type="NCBI Taxonomy" id="9721"/>
</organismHost>
<organismHost>
    <name type="scientific">Homo sapiens</name>
    <name type="common">Human</name>
    <dbReference type="NCBI Taxonomy" id="9606"/>
</organismHost>
<organismHost>
    <name type="scientific">Phocidae</name>
    <name type="common">true seals</name>
    <dbReference type="NCBI Taxonomy" id="9709"/>
</organismHost>
<organismHost>
    <name type="scientific">Sus scrofa</name>
    <name type="common">Pig</name>
    <dbReference type="NCBI Taxonomy" id="9823"/>
</organismHost>
<keyword id="KW-0025">Alternative splicing</keyword>
<keyword id="KW-1048">Host nucleus</keyword>
<keyword id="KW-0472">Membrane</keyword>
<keyword id="KW-0694">RNA-binding</keyword>
<keyword id="KW-0468">Viral matrix protein</keyword>
<keyword id="KW-0946">Virion</keyword>
<comment type="function">
    <text evidence="1">Plays critical roles in virus replication, from virus entry and uncoating to assembly and budding of the virus particle. M1 binding to ribonucleocapsids (RNPs) in nucleus seems to inhibit viral transcription. Interaction of viral NEP with M1-RNP is thought to promote nuclear export of the complex, which is targeted to the virion assembly site at the apical plasma membrane in polarized epithelial cells. Interactions with NA and HA may bring M1, a non-raft-associated protein, into lipid rafts. Forms a continuous shell on the inner side of the lipid bilayer in virion, where it binds the RNP. During virus entry into cell, the M2 ion channel acidifies the internal virion core, inducing M1 dissociation from the RNP. M1-free RNPs are transported to the nucleus, where viral transcription and replication can take place.</text>
</comment>
<comment type="function">
    <text evidence="1">Determines the virion's shape: spherical or filamentous. Clinical isolates of influenza are characterized by the presence of significant proportion of filamentous virions, whereas after multiple passage on eggs or cell culture, virions have only spherical morphology. Filamentous virions are thought to be important to infect neighboring cells, and spherical virions more suited to spread through aerosol between hosts organisms.</text>
</comment>
<comment type="subunit">
    <text evidence="1">Homodimer and homomultimer. Interacts with NEP. Binds ribonucleocapsid by both interacting with genomic RNA and NP protein. May interact with HA and NA. Cannot bind NP without genomic RNA.</text>
</comment>
<comment type="subcellular location">
    <subcellularLocation>
        <location evidence="1">Virion membrane</location>
        <topology evidence="1">Peripheral membrane protein</topology>
        <orientation evidence="1">Cytoplasmic side</orientation>
    </subcellularLocation>
    <subcellularLocation>
        <location evidence="1">Host nucleus</location>
    </subcellularLocation>
</comment>
<comment type="alternative products">
    <event type="alternative splicing"/>
    <isoform>
        <id>Q9IQ48-1</id>
        <name>M1</name>
        <sequence type="displayed"/>
    </isoform>
    <isoform>
        <id>Q9IQ49-1</id>
        <name>M2</name>
        <sequence type="external"/>
    </isoform>
    <text>Only the first 9 residues are shared by the 2 isoforms.</text>
</comment>
<comment type="miscellaneous">
    <text evidence="1">Most abundant protein in virion. When expressed alone can form virus-like particles in transfected cells.</text>
</comment>
<comment type="similarity">
    <text evidence="1">Belongs to the influenza viruses Matrix protein M1 family.</text>
</comment>
<reference key="1">
    <citation type="submission" date="2000-01" db="EMBL/GenBank/DDBJ databases">
        <authorList>
            <person name="Seong B."/>
            <person name="Lee K."/>
        </authorList>
    </citation>
    <scope>NUCLEOTIDE SEQUENCE [GENOMIC RNA]</scope>
</reference>
<reference key="2">
    <citation type="submission" date="2006-08" db="EMBL/GenBank/DDBJ databases">
        <title>Identification of mutations in the cold-adapted X-31 ca influenza vaccine strain.</title>
        <authorList>
            <person name="Lee K.-H."/>
            <person name="Kim Y.H."/>
            <person name="Ha S.-H."/>
            <person name="Kim H.A."/>
            <person name="Seo S.-U."/>
            <person name="Seong B.L."/>
        </authorList>
    </citation>
    <scope>NUCLEOTIDE SEQUENCE</scope>
</reference>
<name>M1_I000X</name>
<dbReference type="EMBL" id="AB036778">
    <property type="protein sequence ID" value="BAA99399.1"/>
    <property type="molecule type" value="Genomic_RNA"/>
</dbReference>
<dbReference type="EMBL" id="DQ874879">
    <property type="protein sequence ID" value="ABH05855.1"/>
    <property type="molecule type" value="Viral_cRNA"/>
</dbReference>
<dbReference type="SMR" id="Q9IQ48"/>
<dbReference type="GO" id="GO:0042025">
    <property type="term" value="C:host cell nucleus"/>
    <property type="evidence" value="ECO:0007669"/>
    <property type="project" value="UniProtKB-SubCell"/>
</dbReference>
<dbReference type="GO" id="GO:0016020">
    <property type="term" value="C:membrane"/>
    <property type="evidence" value="ECO:0007669"/>
    <property type="project" value="UniProtKB-KW"/>
</dbReference>
<dbReference type="GO" id="GO:0055036">
    <property type="term" value="C:virion membrane"/>
    <property type="evidence" value="ECO:0007669"/>
    <property type="project" value="UniProtKB-SubCell"/>
</dbReference>
<dbReference type="GO" id="GO:0003723">
    <property type="term" value="F:RNA binding"/>
    <property type="evidence" value="ECO:0007669"/>
    <property type="project" value="UniProtKB-UniRule"/>
</dbReference>
<dbReference type="GO" id="GO:0039660">
    <property type="term" value="F:structural constituent of virion"/>
    <property type="evidence" value="ECO:0007669"/>
    <property type="project" value="UniProtKB-UniRule"/>
</dbReference>
<dbReference type="GO" id="GO:0046761">
    <property type="term" value="P:viral budding from plasma membrane"/>
    <property type="evidence" value="ECO:0007669"/>
    <property type="project" value="UniProtKB-UniRule"/>
</dbReference>
<dbReference type="FunFam" id="1.10.10.180:FF:000001">
    <property type="entry name" value="Matrix protein 1"/>
    <property type="match status" value="1"/>
</dbReference>
<dbReference type="FunFam" id="1.20.91.10:FF:000001">
    <property type="entry name" value="Matrix protein 1"/>
    <property type="match status" value="1"/>
</dbReference>
<dbReference type="Gene3D" id="1.10.10.180">
    <property type="match status" value="1"/>
</dbReference>
<dbReference type="Gene3D" id="1.20.91.10">
    <property type="match status" value="1"/>
</dbReference>
<dbReference type="HAMAP" id="MF_04068">
    <property type="entry name" value="INFV_M1"/>
    <property type="match status" value="1"/>
</dbReference>
<dbReference type="InterPro" id="IPR036039">
    <property type="entry name" value="Flu_matrix_M1"/>
</dbReference>
<dbReference type="InterPro" id="IPR013188">
    <property type="entry name" value="Flu_matrix_M1_C"/>
</dbReference>
<dbReference type="InterPro" id="IPR001561">
    <property type="entry name" value="Flu_matrix_M1_N"/>
</dbReference>
<dbReference type="InterPro" id="IPR015423">
    <property type="entry name" value="Flu_matrix_M1_N_sub1"/>
</dbReference>
<dbReference type="InterPro" id="IPR015799">
    <property type="entry name" value="Flu_matrix_M1_N_sub2"/>
</dbReference>
<dbReference type="InterPro" id="IPR037533">
    <property type="entry name" value="INFV_M1"/>
</dbReference>
<dbReference type="Pfam" id="PF00598">
    <property type="entry name" value="Flu_M1"/>
    <property type="match status" value="1"/>
</dbReference>
<dbReference type="Pfam" id="PF08289">
    <property type="entry name" value="Flu_M1_C"/>
    <property type="match status" value="1"/>
</dbReference>
<dbReference type="SMART" id="SM00759">
    <property type="entry name" value="Flu_M1_C"/>
    <property type="match status" value="1"/>
</dbReference>
<dbReference type="SUPFAM" id="SSF48145">
    <property type="entry name" value="Influenza virus matrix protein M1"/>
    <property type="match status" value="1"/>
</dbReference>
<proteinExistence type="inferred from homology"/>
<evidence type="ECO:0000255" key="1">
    <source>
        <dbReference type="HAMAP-Rule" id="MF_04068"/>
    </source>
</evidence>
<feature type="chain" id="PRO_0000326275" description="Matrix protein 1">
    <location>
        <begin position="1"/>
        <end position="252"/>
    </location>
</feature>
<feature type="region of interest" description="Membrane-binding" evidence="1">
    <location>
        <begin position="1"/>
        <end position="164"/>
    </location>
</feature>
<feature type="region of interest" description="RNP-binding" evidence="1">
    <location>
        <begin position="165"/>
        <end position="252"/>
    </location>
</feature>
<feature type="short sequence motif" description="Nuclear localization signal" evidence="1">
    <location>
        <begin position="101"/>
        <end position="105"/>
    </location>
</feature>
<feature type="sequence conflict" description="In Ref. 2; ABH05855." ref="2">
    <original>F</original>
    <variation>L</variation>
    <location>
        <position position="3"/>
    </location>
</feature>
<feature type="sequence conflict" description="In Ref. 2; ABH05855." ref="2">
    <original>A</original>
    <variation>T</variation>
    <location>
        <position position="137"/>
    </location>
</feature>
<feature type="sequence conflict" description="In Ref. 2; ABH05855." ref="2">
    <original>I</original>
    <variation>R</variation>
    <location>
        <position position="217"/>
    </location>
</feature>
<sequence length="252" mass="27884">MSFLTEVETYVLSIIPSGPLKAEIAQRLEDVFAGKNTDLEVLMEWLKTRPILSPLTKGILGFVFTLTVPSERGLQRRRFVQNALNGNGDPNNMDKAVKLYRKLKREITFHGAKEISLSYSAGALASCMGLIYNRMGAVTTEVAFGLVCATCEQIADSQHRSHRQMVTTTNPLIRHENRMVLASTTAKAMEQMAGSSEQAAEAMEVASQARQMVQAMITIGTHPSSSAGLKNDLLENLQAYQKRMGVQMQRFK</sequence>
<gene>
    <name evidence="1" type="primary">M</name>
</gene>
<accession>Q9IQ48</accession>
<accession>Q0PDM2</accession>
<protein>
    <recommendedName>
        <fullName evidence="1">Matrix protein 1</fullName>
        <shortName evidence="1">M1</shortName>
    </recommendedName>
</protein>